<protein>
    <recommendedName>
        <fullName evidence="3">Small ribosomal subunit protein eS21</fullName>
    </recommendedName>
    <alternativeName>
        <fullName>40S ribosomal protein S21</fullName>
    </alternativeName>
</protein>
<keyword id="KW-0963">Cytoplasm</keyword>
<keyword id="KW-0256">Endoplasmic reticulum</keyword>
<keyword id="KW-1185">Reference proteome</keyword>
<keyword id="KW-0687">Ribonucleoprotein</keyword>
<keyword id="KW-0689">Ribosomal protein</keyword>
<gene>
    <name type="primary">RPS21</name>
</gene>
<dbReference type="EMBL" id="AY264808">
    <property type="protein sequence ID" value="AAP21828.1"/>
    <property type="molecule type" value="mRNA"/>
</dbReference>
<dbReference type="SMR" id="Q86CT3"/>
<dbReference type="Proteomes" id="UP000515135">
    <property type="component" value="Unplaced"/>
</dbReference>
<dbReference type="GO" id="GO:0005829">
    <property type="term" value="C:cytosol"/>
    <property type="evidence" value="ECO:0007669"/>
    <property type="project" value="UniProtKB-SubCell"/>
</dbReference>
<dbReference type="GO" id="GO:1990904">
    <property type="term" value="C:ribonucleoprotein complex"/>
    <property type="evidence" value="ECO:0007669"/>
    <property type="project" value="UniProtKB-KW"/>
</dbReference>
<dbReference type="GO" id="GO:0005840">
    <property type="term" value="C:ribosome"/>
    <property type="evidence" value="ECO:0007669"/>
    <property type="project" value="UniProtKB-KW"/>
</dbReference>
<dbReference type="GO" id="GO:0005791">
    <property type="term" value="C:rough endoplasmic reticulum"/>
    <property type="evidence" value="ECO:0007669"/>
    <property type="project" value="UniProtKB-SubCell"/>
</dbReference>
<dbReference type="GO" id="GO:0003735">
    <property type="term" value="F:structural constituent of ribosome"/>
    <property type="evidence" value="ECO:0007669"/>
    <property type="project" value="InterPro"/>
</dbReference>
<dbReference type="GO" id="GO:0006412">
    <property type="term" value="P:translation"/>
    <property type="evidence" value="ECO:0007669"/>
    <property type="project" value="InterPro"/>
</dbReference>
<dbReference type="FunFam" id="3.30.1230.20:FF:000001">
    <property type="entry name" value="40S ribosomal protein S21"/>
    <property type="match status" value="1"/>
</dbReference>
<dbReference type="Gene3D" id="3.30.1230.20">
    <property type="match status" value="1"/>
</dbReference>
<dbReference type="InterPro" id="IPR001931">
    <property type="entry name" value="Ribosomal_eS21"/>
</dbReference>
<dbReference type="InterPro" id="IPR018279">
    <property type="entry name" value="Ribosomal_eS21_CS"/>
</dbReference>
<dbReference type="InterPro" id="IPR038579">
    <property type="entry name" value="Ribosomal_eS21_sf"/>
</dbReference>
<dbReference type="PANTHER" id="PTHR10442">
    <property type="entry name" value="40S RIBOSOMAL PROTEIN S21"/>
    <property type="match status" value="1"/>
</dbReference>
<dbReference type="Pfam" id="PF01249">
    <property type="entry name" value="Ribosomal_S21e"/>
    <property type="match status" value="1"/>
</dbReference>
<dbReference type="PIRSF" id="PIRSF002148">
    <property type="entry name" value="Ribosomal_S21e"/>
    <property type="match status" value="1"/>
</dbReference>
<dbReference type="PROSITE" id="PS00996">
    <property type="entry name" value="RIBOSOMAL_S21E"/>
    <property type="match status" value="1"/>
</dbReference>
<feature type="chain" id="PRO_0000194738" description="Small ribosomal subunit protein eS21">
    <location>
        <begin position="1"/>
        <end position="85"/>
    </location>
</feature>
<proteinExistence type="inferred from homology"/>
<sequence>MQNDAGEVVDLYIPRKCSSTNRIIGAKDHASIQINFAEVDPTTGRMTGQYKTYAICGYIRQMGESDDCLKRLAIKDKIIDAKMDA</sequence>
<comment type="subunit">
    <text evidence="1">Component of the 40S small ribosomal subunit.</text>
</comment>
<comment type="subcellular location">
    <subcellularLocation>
        <location evidence="1">Cytoplasm</location>
        <location evidence="1">Cytosol</location>
    </subcellularLocation>
    <subcellularLocation>
        <location evidence="1">Cytoplasm</location>
    </subcellularLocation>
    <subcellularLocation>
        <location evidence="2">Rough endoplasmic reticulum</location>
    </subcellularLocation>
    <text evidence="1 2">Detected on cytosolic polysomes (By similarity). Detected in ribosomes that are associated with the rough endoplasmic reticulum (By similarity).</text>
</comment>
<comment type="similarity">
    <text evidence="3">Belongs to the eukaryotic ribosomal protein eS21 family.</text>
</comment>
<name>RS21_BRABE</name>
<accession>Q86CT3</accession>
<reference key="1">
    <citation type="submission" date="2003-03" db="EMBL/GenBank/DDBJ databases">
        <title>Cloning and phylogenetic analysis of ribosomal protein S21 from Amphioxus Branchiostoma belcheri tsingtaunese.</title>
        <authorList>
            <person name="Zhang S."/>
            <person name="Li H."/>
            <person name="Liu Z."/>
            <person name="Xu A."/>
        </authorList>
    </citation>
    <scope>NUCLEOTIDE SEQUENCE [MRNA]</scope>
    <source>
        <strain>Subsp. tsingtauense</strain>
    </source>
</reference>
<organism>
    <name type="scientific">Branchiostoma belcheri</name>
    <name type="common">Amphioxus</name>
    <dbReference type="NCBI Taxonomy" id="7741"/>
    <lineage>
        <taxon>Eukaryota</taxon>
        <taxon>Metazoa</taxon>
        <taxon>Chordata</taxon>
        <taxon>Cephalochordata</taxon>
        <taxon>Leptocardii</taxon>
        <taxon>Amphioxiformes</taxon>
        <taxon>Branchiostomatidae</taxon>
        <taxon>Branchiostoma</taxon>
    </lineage>
</organism>
<evidence type="ECO:0000250" key="1">
    <source>
        <dbReference type="UniProtKB" id="P63220"/>
    </source>
</evidence>
<evidence type="ECO:0000250" key="2">
    <source>
        <dbReference type="UniProtKB" id="P63221"/>
    </source>
</evidence>
<evidence type="ECO:0000305" key="3"/>